<feature type="chain" id="PRO_0000147584" description="UPF0251 protein PH0803">
    <location>
        <begin position="1"/>
        <end position="110"/>
    </location>
</feature>
<evidence type="ECO:0000305" key="1"/>
<sequence>MPFGWGRGRGRRRKMRMIRFPPQVRHFYPAIPSVGPPKPPIIMTYEEFEALRLVDYEGLTQEEAGRRMGISRGTVWRALTSARKKVAQMLVEGRELIILPQGNEIVRDEK</sequence>
<protein>
    <recommendedName>
        <fullName>UPF0251 protein PH0803</fullName>
    </recommendedName>
</protein>
<name>Y803_PYRHO</name>
<organism>
    <name type="scientific">Pyrococcus horikoshii (strain ATCC 700860 / DSM 12428 / JCM 9974 / NBRC 100139 / OT-3)</name>
    <dbReference type="NCBI Taxonomy" id="70601"/>
    <lineage>
        <taxon>Archaea</taxon>
        <taxon>Methanobacteriati</taxon>
        <taxon>Methanobacteriota</taxon>
        <taxon>Thermococci</taxon>
        <taxon>Thermococcales</taxon>
        <taxon>Thermococcaceae</taxon>
        <taxon>Pyrococcus</taxon>
    </lineage>
</organism>
<accession>O58533</accession>
<gene>
    <name type="ordered locus">PH0803</name>
</gene>
<dbReference type="EMBL" id="BA000001">
    <property type="protein sequence ID" value="BAA29896.1"/>
    <property type="molecule type" value="Genomic_DNA"/>
</dbReference>
<dbReference type="PIR" id="F71129">
    <property type="entry name" value="F71129"/>
</dbReference>
<dbReference type="RefSeq" id="WP_010884897.1">
    <property type="nucleotide sequence ID" value="NC_000961.1"/>
</dbReference>
<dbReference type="SMR" id="O58533"/>
<dbReference type="STRING" id="70601.gene:9377753"/>
<dbReference type="EnsemblBacteria" id="BAA29896">
    <property type="protein sequence ID" value="BAA29896"/>
    <property type="gene ID" value="BAA29896"/>
</dbReference>
<dbReference type="GeneID" id="1443132"/>
<dbReference type="KEGG" id="pho:PH0803"/>
<dbReference type="eggNOG" id="arCOG02238">
    <property type="taxonomic scope" value="Archaea"/>
</dbReference>
<dbReference type="OrthoDB" id="74471at2157"/>
<dbReference type="Proteomes" id="UP000000752">
    <property type="component" value="Chromosome"/>
</dbReference>
<dbReference type="Gene3D" id="1.10.10.10">
    <property type="entry name" value="Winged helix-like DNA-binding domain superfamily/Winged helix DNA-binding domain"/>
    <property type="match status" value="1"/>
</dbReference>
<dbReference type="HAMAP" id="MF_00674">
    <property type="entry name" value="UPF0251"/>
    <property type="match status" value="1"/>
</dbReference>
<dbReference type="InterPro" id="IPR013324">
    <property type="entry name" value="RNA_pol_sigma_r3/r4-like"/>
</dbReference>
<dbReference type="InterPro" id="IPR002852">
    <property type="entry name" value="UPF0251"/>
</dbReference>
<dbReference type="InterPro" id="IPR036388">
    <property type="entry name" value="WH-like_DNA-bd_sf"/>
</dbReference>
<dbReference type="NCBIfam" id="NF003257">
    <property type="entry name" value="PRK04217.1"/>
    <property type="match status" value="1"/>
</dbReference>
<dbReference type="PANTHER" id="PTHR37478">
    <property type="match status" value="1"/>
</dbReference>
<dbReference type="PANTHER" id="PTHR37478:SF2">
    <property type="entry name" value="UPF0251 PROTEIN TK0562"/>
    <property type="match status" value="1"/>
</dbReference>
<dbReference type="Pfam" id="PF02001">
    <property type="entry name" value="DUF134"/>
    <property type="match status" value="1"/>
</dbReference>
<dbReference type="SUPFAM" id="SSF88659">
    <property type="entry name" value="Sigma3 and sigma4 domains of RNA polymerase sigma factors"/>
    <property type="match status" value="1"/>
</dbReference>
<proteinExistence type="inferred from homology"/>
<comment type="similarity">
    <text evidence="1">Belongs to the UPF0251 family.</text>
</comment>
<reference key="1">
    <citation type="journal article" date="1998" name="DNA Res.">
        <title>Complete sequence and gene organization of the genome of a hyper-thermophilic archaebacterium, Pyrococcus horikoshii OT3.</title>
        <authorList>
            <person name="Kawarabayasi Y."/>
            <person name="Sawada M."/>
            <person name="Horikawa H."/>
            <person name="Haikawa Y."/>
            <person name="Hino Y."/>
            <person name="Yamamoto S."/>
            <person name="Sekine M."/>
            <person name="Baba S."/>
            <person name="Kosugi H."/>
            <person name="Hosoyama A."/>
            <person name="Nagai Y."/>
            <person name="Sakai M."/>
            <person name="Ogura K."/>
            <person name="Otsuka R."/>
            <person name="Nakazawa H."/>
            <person name="Takamiya M."/>
            <person name="Ohfuku Y."/>
            <person name="Funahashi T."/>
            <person name="Tanaka T."/>
            <person name="Kudoh Y."/>
            <person name="Yamazaki J."/>
            <person name="Kushida N."/>
            <person name="Oguchi A."/>
            <person name="Aoki K."/>
            <person name="Yoshizawa T."/>
            <person name="Nakamura Y."/>
            <person name="Robb F.T."/>
            <person name="Horikoshi K."/>
            <person name="Masuchi Y."/>
            <person name="Shizuya H."/>
            <person name="Kikuchi H."/>
        </authorList>
    </citation>
    <scope>NUCLEOTIDE SEQUENCE [LARGE SCALE GENOMIC DNA]</scope>
    <source>
        <strain>ATCC 700860 / DSM 12428 / JCM 9974 / NBRC 100139 / OT-3</strain>
    </source>
</reference>